<sequence>MQYTPDTAWKITGFSREISPAYRQKLLSLGMLPGSSFNVVRVAPLGDPIHIETRRVSLVLRKKDLALLEVEAVSC</sequence>
<organism>
    <name type="scientific">Escherichia coli (strain K12)</name>
    <dbReference type="NCBI Taxonomy" id="83333"/>
    <lineage>
        <taxon>Bacteria</taxon>
        <taxon>Pseudomonadati</taxon>
        <taxon>Pseudomonadota</taxon>
        <taxon>Gammaproteobacteria</taxon>
        <taxon>Enterobacterales</taxon>
        <taxon>Enterobacteriaceae</taxon>
        <taxon>Escherichia</taxon>
    </lineage>
</organism>
<comment type="function">
    <text evidence="2 3">Involved in Fe(2+) ion uptake (PubMed:8407793). Does not stimulate the GTPase activity of the N-terminus of FeoB (residues 1-276).</text>
</comment>
<comment type="subunit">
    <text evidence="2">Monomer.</text>
</comment>
<comment type="subcellular location">
    <subcellularLocation>
        <location evidence="5">Cytoplasm</location>
    </subcellularLocation>
</comment>
<comment type="induction">
    <text evidence="1">Induced by hydroxyurea (PubMed:20005847).</text>
</comment>
<comment type="disruption phenotype">
    <text evidence="3">Reduced uptake of Fe(2+).</text>
</comment>
<comment type="similarity">
    <text evidence="4">Belongs to the FeoA family.</text>
</comment>
<feature type="chain" id="PRO_0000087222" description="Fe(2+) transport protein A">
    <location>
        <begin position="1"/>
        <end position="75"/>
    </location>
</feature>
<feature type="strand" evidence="7">
    <location>
        <begin position="8"/>
        <end position="13"/>
    </location>
</feature>
<feature type="strand" evidence="7">
    <location>
        <begin position="16"/>
        <end position="18"/>
    </location>
</feature>
<feature type="helix" evidence="7">
    <location>
        <begin position="20"/>
        <end position="28"/>
    </location>
</feature>
<feature type="strand" evidence="7">
    <location>
        <begin position="33"/>
        <end position="42"/>
    </location>
</feature>
<feature type="turn" evidence="7">
    <location>
        <begin position="44"/>
        <end position="46"/>
    </location>
</feature>
<feature type="strand" evidence="7">
    <location>
        <begin position="49"/>
        <end position="52"/>
    </location>
</feature>
<feature type="strand" evidence="7">
    <location>
        <begin position="57"/>
        <end position="60"/>
    </location>
</feature>
<feature type="helix" evidence="7">
    <location>
        <begin position="62"/>
        <end position="67"/>
    </location>
</feature>
<feature type="strand" evidence="7">
    <location>
        <begin position="68"/>
        <end position="72"/>
    </location>
</feature>
<dbReference type="EMBL" id="X71063">
    <property type="protein sequence ID" value="CAA50386.1"/>
    <property type="molecule type" value="Genomic_DNA"/>
</dbReference>
<dbReference type="EMBL" id="U18997">
    <property type="protein sequence ID" value="AAA58206.1"/>
    <property type="molecule type" value="Genomic_DNA"/>
</dbReference>
<dbReference type="EMBL" id="U00096">
    <property type="protein sequence ID" value="AAC76433.1"/>
    <property type="molecule type" value="Genomic_DNA"/>
</dbReference>
<dbReference type="EMBL" id="AP009048">
    <property type="protein sequence ID" value="BAE77883.1"/>
    <property type="molecule type" value="Genomic_DNA"/>
</dbReference>
<dbReference type="PIR" id="B36932">
    <property type="entry name" value="B36932"/>
</dbReference>
<dbReference type="RefSeq" id="NP_417867.1">
    <property type="nucleotide sequence ID" value="NC_000913.3"/>
</dbReference>
<dbReference type="RefSeq" id="WP_001200455.1">
    <property type="nucleotide sequence ID" value="NZ_SSZK01000008.1"/>
</dbReference>
<dbReference type="PDB" id="2LX9">
    <property type="method" value="NMR"/>
    <property type="chains" value="A=1-75"/>
</dbReference>
<dbReference type="PDBsum" id="2LX9"/>
<dbReference type="BMRB" id="P0AEL3"/>
<dbReference type="SMR" id="P0AEL3"/>
<dbReference type="BioGRID" id="4261724">
    <property type="interactions" value="12"/>
</dbReference>
<dbReference type="BioGRID" id="852218">
    <property type="interactions" value="2"/>
</dbReference>
<dbReference type="FunCoup" id="P0AEL3">
    <property type="interactions" value="52"/>
</dbReference>
<dbReference type="IntAct" id="P0AEL3">
    <property type="interactions" value="4"/>
</dbReference>
<dbReference type="STRING" id="511145.b3408"/>
<dbReference type="TCDB" id="9.A.8.1.1">
    <property type="family name" value="the ferrous iron uptake (feob) family"/>
</dbReference>
<dbReference type="PaxDb" id="511145-b3408"/>
<dbReference type="EnsemblBacteria" id="AAC76433">
    <property type="protein sequence ID" value="AAC76433"/>
    <property type="gene ID" value="b3408"/>
</dbReference>
<dbReference type="GeneID" id="93778590"/>
<dbReference type="GeneID" id="947909"/>
<dbReference type="KEGG" id="ecj:JW3371"/>
<dbReference type="KEGG" id="eco:b3408"/>
<dbReference type="KEGG" id="ecoc:C3026_18490"/>
<dbReference type="PATRIC" id="fig|1411691.4.peg.3321"/>
<dbReference type="EchoBASE" id="EB2025"/>
<dbReference type="eggNOG" id="COG1918">
    <property type="taxonomic scope" value="Bacteria"/>
</dbReference>
<dbReference type="HOGENOM" id="CLU_150646_13_0_6"/>
<dbReference type="InParanoid" id="P0AEL3"/>
<dbReference type="OMA" id="MGDPVQI"/>
<dbReference type="OrthoDB" id="9811076at2"/>
<dbReference type="PhylomeDB" id="P0AEL3"/>
<dbReference type="BioCyc" id="EcoCyc:EG12101-MONOMER"/>
<dbReference type="EvolutionaryTrace" id="P0AEL3"/>
<dbReference type="PRO" id="PR:P0AEL3"/>
<dbReference type="Proteomes" id="UP000000625">
    <property type="component" value="Chromosome"/>
</dbReference>
<dbReference type="GO" id="GO:0005737">
    <property type="term" value="C:cytoplasm"/>
    <property type="evidence" value="ECO:0007669"/>
    <property type="project" value="UniProtKB-SubCell"/>
</dbReference>
<dbReference type="GO" id="GO:0046914">
    <property type="term" value="F:transition metal ion binding"/>
    <property type="evidence" value="ECO:0007669"/>
    <property type="project" value="InterPro"/>
</dbReference>
<dbReference type="GO" id="GO:0006974">
    <property type="term" value="P:DNA damage response"/>
    <property type="evidence" value="ECO:0000270"/>
    <property type="project" value="EcoliWiki"/>
</dbReference>
<dbReference type="GO" id="GO:0006826">
    <property type="term" value="P:iron ion transport"/>
    <property type="evidence" value="ECO:0007669"/>
    <property type="project" value="UniProtKB-KW"/>
</dbReference>
<dbReference type="FunFam" id="2.30.30.90:FF:000001">
    <property type="entry name" value="Ferrous iron transporter A"/>
    <property type="match status" value="1"/>
</dbReference>
<dbReference type="Gene3D" id="2.30.30.90">
    <property type="match status" value="1"/>
</dbReference>
<dbReference type="InterPro" id="IPR007167">
    <property type="entry name" value="Fe-transptr_FeoA-like"/>
</dbReference>
<dbReference type="InterPro" id="IPR052713">
    <property type="entry name" value="FeoA"/>
</dbReference>
<dbReference type="InterPro" id="IPR038157">
    <property type="entry name" value="FeoA_core_dom"/>
</dbReference>
<dbReference type="InterPro" id="IPR008988">
    <property type="entry name" value="Transcriptional_repressor_C"/>
</dbReference>
<dbReference type="NCBIfam" id="NF007106">
    <property type="entry name" value="PRK09555.1"/>
    <property type="match status" value="1"/>
</dbReference>
<dbReference type="PANTHER" id="PTHR42954">
    <property type="entry name" value="FE(2+) TRANSPORT PROTEIN A"/>
    <property type="match status" value="1"/>
</dbReference>
<dbReference type="PANTHER" id="PTHR42954:SF2">
    <property type="entry name" value="FE(2+) TRANSPORT PROTEIN A"/>
    <property type="match status" value="1"/>
</dbReference>
<dbReference type="Pfam" id="PF04023">
    <property type="entry name" value="FeoA"/>
    <property type="match status" value="1"/>
</dbReference>
<dbReference type="SMART" id="SM00899">
    <property type="entry name" value="FeoA"/>
    <property type="match status" value="1"/>
</dbReference>
<dbReference type="SUPFAM" id="SSF50037">
    <property type="entry name" value="C-terminal domain of transcriptional repressors"/>
    <property type="match status" value="1"/>
</dbReference>
<proteinExistence type="evidence at protein level"/>
<accession>P0AEL3</accession>
<accession>P33649</accession>
<accession>Q2M773</accession>
<gene>
    <name type="primary">feoA</name>
    <name type="ordered locus">b3408</name>
    <name type="ordered locus">JW3371</name>
</gene>
<reference key="1">
    <citation type="journal article" date="1993" name="J. Bacteriol.">
        <title>Characterization of the ferrous iron uptake system of Escherichia coli.</title>
        <authorList>
            <person name="Kammler M."/>
            <person name="Schoen C."/>
            <person name="Hantke K."/>
        </authorList>
    </citation>
    <scope>NUCLEOTIDE SEQUENCE [GENOMIC DNA]</scope>
    <scope>FUNCTION</scope>
    <scope>DISRUPTION PHENOTYPE</scope>
    <source>
        <strain>K12 / MC4100</strain>
    </source>
</reference>
<reference key="2">
    <citation type="journal article" date="1997" name="Science">
        <title>The complete genome sequence of Escherichia coli K-12.</title>
        <authorList>
            <person name="Blattner F.R."/>
            <person name="Plunkett G. III"/>
            <person name="Bloch C.A."/>
            <person name="Perna N.T."/>
            <person name="Burland V."/>
            <person name="Riley M."/>
            <person name="Collado-Vides J."/>
            <person name="Glasner J.D."/>
            <person name="Rode C.K."/>
            <person name="Mayhew G.F."/>
            <person name="Gregor J."/>
            <person name="Davis N.W."/>
            <person name="Kirkpatrick H.A."/>
            <person name="Goeden M.A."/>
            <person name="Rose D.J."/>
            <person name="Mau B."/>
            <person name="Shao Y."/>
        </authorList>
    </citation>
    <scope>NUCLEOTIDE SEQUENCE [LARGE SCALE GENOMIC DNA]</scope>
    <source>
        <strain>K12 / MG1655 / ATCC 47076</strain>
    </source>
</reference>
<reference key="3">
    <citation type="journal article" date="2006" name="Mol. Syst. Biol.">
        <title>Highly accurate genome sequences of Escherichia coli K-12 strains MG1655 and W3110.</title>
        <authorList>
            <person name="Hayashi K."/>
            <person name="Morooka N."/>
            <person name="Yamamoto Y."/>
            <person name="Fujita K."/>
            <person name="Isono K."/>
            <person name="Choi S."/>
            <person name="Ohtsubo E."/>
            <person name="Baba T."/>
            <person name="Wanner B.L."/>
            <person name="Mori H."/>
            <person name="Horiuchi T."/>
        </authorList>
    </citation>
    <scope>NUCLEOTIDE SEQUENCE [LARGE SCALE GENOMIC DNA]</scope>
    <source>
        <strain>K12 / W3110 / ATCC 27325 / DSM 5911</strain>
    </source>
</reference>
<reference key="4">
    <citation type="journal article" date="2009" name="Mol. Cell">
        <title>Hydroxyurea induces hydroxyl radical-mediated cell death in Escherichia coli.</title>
        <authorList>
            <person name="Davies B.W."/>
            <person name="Kohanski M.A."/>
            <person name="Simmons L.A."/>
            <person name="Winkler J.A."/>
            <person name="Collins J.J."/>
            <person name="Walker G.C."/>
        </authorList>
    </citation>
    <scope>INDUCTION BY HYDROXYUREA</scope>
    <source>
        <strain>K12 / MC4100 / ATCC 35695 / DSM 6574</strain>
    </source>
</reference>
<reference evidence="6" key="5">
    <citation type="journal article" date="2013" name="J. Bacteriol.">
        <title>Solution structure of Escherichia coli FeoA and its potential role in bacterial ferrous iron transport.</title>
        <authorList>
            <person name="Lau C.K."/>
            <person name="Ishida H."/>
            <person name="Liu Z."/>
            <person name="Vogel H.J."/>
        </authorList>
    </citation>
    <scope>STRUCTURE BY NMR</scope>
    <scope>SUBUNIT</scope>
    <scope>SUBCELLULAR LOCATION</scope>
    <source>
        <strain>K12</strain>
    </source>
</reference>
<protein>
    <recommendedName>
        <fullName evidence="4">Fe(2+) transport protein A</fullName>
    </recommendedName>
    <alternativeName>
        <fullName>Ferrous iron transport protein A</fullName>
    </alternativeName>
</protein>
<evidence type="ECO:0000269" key="1">
    <source>
    </source>
</evidence>
<evidence type="ECO:0000269" key="2">
    <source>
    </source>
</evidence>
<evidence type="ECO:0000269" key="3">
    <source>
    </source>
</evidence>
<evidence type="ECO:0000305" key="4"/>
<evidence type="ECO:0000305" key="5">
    <source>
    </source>
</evidence>
<evidence type="ECO:0007744" key="6">
    <source>
        <dbReference type="PDB" id="2LX9"/>
    </source>
</evidence>
<evidence type="ECO:0007829" key="7">
    <source>
        <dbReference type="PDB" id="2LX9"/>
    </source>
</evidence>
<name>FEOA_ECOLI</name>
<keyword id="KW-0002">3D-structure</keyword>
<keyword id="KW-0963">Cytoplasm</keyword>
<keyword id="KW-0406">Ion transport</keyword>
<keyword id="KW-0408">Iron</keyword>
<keyword id="KW-0410">Iron transport</keyword>
<keyword id="KW-1185">Reference proteome</keyword>
<keyword id="KW-0813">Transport</keyword>